<protein>
    <recommendedName>
        <fullName evidence="1">Adenylate kinase</fullName>
        <shortName evidence="1">AK</shortName>
        <ecNumber evidence="1">2.7.4.3</ecNumber>
    </recommendedName>
    <alternativeName>
        <fullName evidence="1">ATP-AMP transphosphorylase</fullName>
    </alternativeName>
    <alternativeName>
        <fullName evidence="1">ATP:AMP phosphotransferase</fullName>
    </alternativeName>
    <alternativeName>
        <fullName evidence="1">Adenylate monophosphate kinase</fullName>
    </alternativeName>
</protein>
<feature type="chain" id="PRO_1000100619" description="Adenylate kinase">
    <location>
        <begin position="1"/>
        <end position="217"/>
    </location>
</feature>
<feature type="region of interest" description="NMP" evidence="1">
    <location>
        <begin position="30"/>
        <end position="59"/>
    </location>
</feature>
<feature type="region of interest" description="LID" evidence="1">
    <location>
        <begin position="126"/>
        <end position="163"/>
    </location>
</feature>
<feature type="binding site" evidence="1">
    <location>
        <begin position="10"/>
        <end position="15"/>
    </location>
    <ligand>
        <name>ATP</name>
        <dbReference type="ChEBI" id="CHEBI:30616"/>
    </ligand>
</feature>
<feature type="binding site" evidence="1">
    <location>
        <position position="31"/>
    </location>
    <ligand>
        <name>AMP</name>
        <dbReference type="ChEBI" id="CHEBI:456215"/>
    </ligand>
</feature>
<feature type="binding site" evidence="1">
    <location>
        <position position="36"/>
    </location>
    <ligand>
        <name>AMP</name>
        <dbReference type="ChEBI" id="CHEBI:456215"/>
    </ligand>
</feature>
<feature type="binding site" evidence="1">
    <location>
        <begin position="57"/>
        <end position="59"/>
    </location>
    <ligand>
        <name>AMP</name>
        <dbReference type="ChEBI" id="CHEBI:456215"/>
    </ligand>
</feature>
<feature type="binding site" evidence="1">
    <location>
        <begin position="85"/>
        <end position="88"/>
    </location>
    <ligand>
        <name>AMP</name>
        <dbReference type="ChEBI" id="CHEBI:456215"/>
    </ligand>
</feature>
<feature type="binding site" evidence="1">
    <location>
        <position position="92"/>
    </location>
    <ligand>
        <name>AMP</name>
        <dbReference type="ChEBI" id="CHEBI:456215"/>
    </ligand>
</feature>
<feature type="binding site" evidence="1">
    <location>
        <position position="127"/>
    </location>
    <ligand>
        <name>ATP</name>
        <dbReference type="ChEBI" id="CHEBI:30616"/>
    </ligand>
</feature>
<feature type="binding site" evidence="1">
    <location>
        <position position="130"/>
    </location>
    <ligand>
        <name>Zn(2+)</name>
        <dbReference type="ChEBI" id="CHEBI:29105"/>
        <note>structural</note>
    </ligand>
</feature>
<feature type="binding site" evidence="1">
    <location>
        <position position="133"/>
    </location>
    <ligand>
        <name>Zn(2+)</name>
        <dbReference type="ChEBI" id="CHEBI:29105"/>
        <note>structural</note>
    </ligand>
</feature>
<feature type="binding site" evidence="1">
    <location>
        <begin position="136"/>
        <end position="137"/>
    </location>
    <ligand>
        <name>ATP</name>
        <dbReference type="ChEBI" id="CHEBI:30616"/>
    </ligand>
</feature>
<feature type="binding site" evidence="1">
    <location>
        <position position="150"/>
    </location>
    <ligand>
        <name>Zn(2+)</name>
        <dbReference type="ChEBI" id="CHEBI:29105"/>
        <note>structural</note>
    </ligand>
</feature>
<feature type="binding site" evidence="1">
    <location>
        <position position="153"/>
    </location>
    <ligand>
        <name>Zn(2+)</name>
        <dbReference type="ChEBI" id="CHEBI:29105"/>
        <note>structural</note>
    </ligand>
</feature>
<feature type="binding site" evidence="1">
    <location>
        <position position="160"/>
    </location>
    <ligand>
        <name>AMP</name>
        <dbReference type="ChEBI" id="CHEBI:456215"/>
    </ligand>
</feature>
<feature type="binding site" evidence="1">
    <location>
        <position position="171"/>
    </location>
    <ligand>
        <name>AMP</name>
        <dbReference type="ChEBI" id="CHEBI:456215"/>
    </ligand>
</feature>
<feature type="binding site" evidence="1">
    <location>
        <position position="199"/>
    </location>
    <ligand>
        <name>ATP</name>
        <dbReference type="ChEBI" id="CHEBI:30616"/>
    </ligand>
</feature>
<accession>B0K5R3</accession>
<comment type="function">
    <text evidence="1">Catalyzes the reversible transfer of the terminal phosphate group between ATP and AMP. Plays an important role in cellular energy homeostasis and in adenine nucleotide metabolism.</text>
</comment>
<comment type="catalytic activity">
    <reaction evidence="1">
        <text>AMP + ATP = 2 ADP</text>
        <dbReference type="Rhea" id="RHEA:12973"/>
        <dbReference type="ChEBI" id="CHEBI:30616"/>
        <dbReference type="ChEBI" id="CHEBI:456215"/>
        <dbReference type="ChEBI" id="CHEBI:456216"/>
        <dbReference type="EC" id="2.7.4.3"/>
    </reaction>
</comment>
<comment type="pathway">
    <text evidence="1">Purine metabolism; AMP biosynthesis via salvage pathway; AMP from ADP: step 1/1.</text>
</comment>
<comment type="subunit">
    <text evidence="1">Monomer.</text>
</comment>
<comment type="subcellular location">
    <subcellularLocation>
        <location evidence="1">Cytoplasm</location>
    </subcellularLocation>
</comment>
<comment type="domain">
    <text evidence="1">Consists of three domains, a large central CORE domain and two small peripheral domains, NMPbind and LID, which undergo movements during catalysis. The LID domain closes over the site of phosphoryl transfer upon ATP binding. Assembling and dissambling the active center during each catalytic cycle provides an effective means to prevent ATP hydrolysis. Some bacteria have evolved a zinc-coordinating structure that stabilizes the LID domain.</text>
</comment>
<comment type="similarity">
    <text evidence="1">Belongs to the adenylate kinase family.</text>
</comment>
<sequence length="217" mass="24396">MRVILLGPPGAGKGTQAVKIAKEFDIPHISTGDIFRQNLRDNTDLGKLAKEYMDKGLLVPDEVTNKIVEDRLEKDDCQKGFLLDGYPRNVAQAEELDRFLHDKGIHLDCVLNIEVDREALIERITGRRVCPNCGATYHIKTSPPAVDNVCDKCGAQLIQRSDDKLESVVKRLEVYESQTKPLIEYYTKKNTLVNIDGNKSVEEVFEDIKKALGDRGK</sequence>
<evidence type="ECO:0000255" key="1">
    <source>
        <dbReference type="HAMAP-Rule" id="MF_00235"/>
    </source>
</evidence>
<reference key="1">
    <citation type="submission" date="2008-01" db="EMBL/GenBank/DDBJ databases">
        <title>Complete sequence of Thermoanaerobacter sp. X514.</title>
        <authorList>
            <consortium name="US DOE Joint Genome Institute"/>
            <person name="Copeland A."/>
            <person name="Lucas S."/>
            <person name="Lapidus A."/>
            <person name="Barry K."/>
            <person name="Glavina del Rio T."/>
            <person name="Dalin E."/>
            <person name="Tice H."/>
            <person name="Pitluck S."/>
            <person name="Bruce D."/>
            <person name="Goodwin L."/>
            <person name="Saunders E."/>
            <person name="Brettin T."/>
            <person name="Detter J.C."/>
            <person name="Han C."/>
            <person name="Schmutz J."/>
            <person name="Larimer F."/>
            <person name="Land M."/>
            <person name="Hauser L."/>
            <person name="Kyrpides N."/>
            <person name="Kim E."/>
            <person name="Hemme C."/>
            <person name="Fields M.W."/>
            <person name="He Z."/>
            <person name="Zhou J."/>
            <person name="Richardson P."/>
        </authorList>
    </citation>
    <scope>NUCLEOTIDE SEQUENCE [LARGE SCALE GENOMIC DNA]</scope>
    <source>
        <strain>X514</strain>
    </source>
</reference>
<dbReference type="EC" id="2.7.4.3" evidence="1"/>
<dbReference type="EMBL" id="CP000923">
    <property type="protein sequence ID" value="ABY92189.1"/>
    <property type="molecule type" value="Genomic_DNA"/>
</dbReference>
<dbReference type="RefSeq" id="WP_003868580.1">
    <property type="nucleotide sequence ID" value="NC_010320.1"/>
</dbReference>
<dbReference type="SMR" id="B0K5R3"/>
<dbReference type="KEGG" id="tex:Teth514_0887"/>
<dbReference type="HOGENOM" id="CLU_032354_1_2_9"/>
<dbReference type="UniPathway" id="UPA00588">
    <property type="reaction ID" value="UER00649"/>
</dbReference>
<dbReference type="Proteomes" id="UP000002155">
    <property type="component" value="Chromosome"/>
</dbReference>
<dbReference type="GO" id="GO:0005737">
    <property type="term" value="C:cytoplasm"/>
    <property type="evidence" value="ECO:0007669"/>
    <property type="project" value="UniProtKB-SubCell"/>
</dbReference>
<dbReference type="GO" id="GO:0004017">
    <property type="term" value="F:adenylate kinase activity"/>
    <property type="evidence" value="ECO:0007669"/>
    <property type="project" value="UniProtKB-UniRule"/>
</dbReference>
<dbReference type="GO" id="GO:0005524">
    <property type="term" value="F:ATP binding"/>
    <property type="evidence" value="ECO:0007669"/>
    <property type="project" value="UniProtKB-UniRule"/>
</dbReference>
<dbReference type="GO" id="GO:0008270">
    <property type="term" value="F:zinc ion binding"/>
    <property type="evidence" value="ECO:0007669"/>
    <property type="project" value="UniProtKB-UniRule"/>
</dbReference>
<dbReference type="GO" id="GO:0044209">
    <property type="term" value="P:AMP salvage"/>
    <property type="evidence" value="ECO:0007669"/>
    <property type="project" value="UniProtKB-UniRule"/>
</dbReference>
<dbReference type="CDD" id="cd01428">
    <property type="entry name" value="ADK"/>
    <property type="match status" value="1"/>
</dbReference>
<dbReference type="FunFam" id="3.40.50.300:FF:000106">
    <property type="entry name" value="Adenylate kinase mitochondrial"/>
    <property type="match status" value="1"/>
</dbReference>
<dbReference type="Gene3D" id="3.40.50.300">
    <property type="entry name" value="P-loop containing nucleotide triphosphate hydrolases"/>
    <property type="match status" value="1"/>
</dbReference>
<dbReference type="HAMAP" id="MF_00235">
    <property type="entry name" value="Adenylate_kinase_Adk"/>
    <property type="match status" value="1"/>
</dbReference>
<dbReference type="InterPro" id="IPR006259">
    <property type="entry name" value="Adenyl_kin_sub"/>
</dbReference>
<dbReference type="InterPro" id="IPR000850">
    <property type="entry name" value="Adenylat/UMP-CMP_kin"/>
</dbReference>
<dbReference type="InterPro" id="IPR033690">
    <property type="entry name" value="Adenylat_kinase_CS"/>
</dbReference>
<dbReference type="InterPro" id="IPR007862">
    <property type="entry name" value="Adenylate_kinase_lid-dom"/>
</dbReference>
<dbReference type="InterPro" id="IPR027417">
    <property type="entry name" value="P-loop_NTPase"/>
</dbReference>
<dbReference type="NCBIfam" id="TIGR01351">
    <property type="entry name" value="adk"/>
    <property type="match status" value="1"/>
</dbReference>
<dbReference type="NCBIfam" id="NF001380">
    <property type="entry name" value="PRK00279.1-2"/>
    <property type="match status" value="1"/>
</dbReference>
<dbReference type="NCBIfam" id="NF001381">
    <property type="entry name" value="PRK00279.1-3"/>
    <property type="match status" value="1"/>
</dbReference>
<dbReference type="NCBIfam" id="NF011100">
    <property type="entry name" value="PRK14527.1"/>
    <property type="match status" value="1"/>
</dbReference>
<dbReference type="PANTHER" id="PTHR23359">
    <property type="entry name" value="NUCLEOTIDE KINASE"/>
    <property type="match status" value="1"/>
</dbReference>
<dbReference type="Pfam" id="PF00406">
    <property type="entry name" value="ADK"/>
    <property type="match status" value="1"/>
</dbReference>
<dbReference type="Pfam" id="PF05191">
    <property type="entry name" value="ADK_lid"/>
    <property type="match status" value="1"/>
</dbReference>
<dbReference type="PRINTS" id="PR00094">
    <property type="entry name" value="ADENYLTKNASE"/>
</dbReference>
<dbReference type="SUPFAM" id="SSF52540">
    <property type="entry name" value="P-loop containing nucleoside triphosphate hydrolases"/>
    <property type="match status" value="1"/>
</dbReference>
<dbReference type="PROSITE" id="PS00113">
    <property type="entry name" value="ADENYLATE_KINASE"/>
    <property type="match status" value="1"/>
</dbReference>
<gene>
    <name evidence="1" type="primary">adk</name>
    <name type="ordered locus">Teth514_0887</name>
</gene>
<proteinExistence type="inferred from homology"/>
<keyword id="KW-0067">ATP-binding</keyword>
<keyword id="KW-0963">Cytoplasm</keyword>
<keyword id="KW-0418">Kinase</keyword>
<keyword id="KW-0479">Metal-binding</keyword>
<keyword id="KW-0545">Nucleotide biosynthesis</keyword>
<keyword id="KW-0547">Nucleotide-binding</keyword>
<keyword id="KW-0808">Transferase</keyword>
<keyword id="KW-0862">Zinc</keyword>
<name>KAD_THEPX</name>
<organism>
    <name type="scientific">Thermoanaerobacter sp. (strain X514)</name>
    <dbReference type="NCBI Taxonomy" id="399726"/>
    <lineage>
        <taxon>Bacteria</taxon>
        <taxon>Bacillati</taxon>
        <taxon>Bacillota</taxon>
        <taxon>Clostridia</taxon>
        <taxon>Thermoanaerobacterales</taxon>
        <taxon>Thermoanaerobacteraceae</taxon>
        <taxon>Thermoanaerobacter</taxon>
    </lineage>
</organism>